<reference key="1">
    <citation type="journal article" date="1992" name="Eur. J. Biochem.">
        <title>The primary structure of the antenna polypeptides of Ectothiorhodospira halochloris and Ectothiorhodospira halophila. Four core-type antenna polypeptides in E. halochloris and E. halophila.</title>
        <authorList>
            <person name="Wagner-Huber R."/>
            <person name="Brunisholz R.A."/>
            <person name="Bissig I."/>
            <person name="Frank G."/>
            <person name="Suter F."/>
            <person name="Zuber H."/>
        </authorList>
    </citation>
    <scope>PROTEIN SEQUENCE</scope>
</reference>
<feature type="chain" id="PRO_0000099778" description="Light-harvesting protein B800/850/890 alpha-1 chain">
    <location>
        <begin position="1"/>
        <end position="46" status="greater than"/>
    </location>
</feature>
<feature type="topological domain" description="Cytoplasmic" evidence="1">
    <location>
        <begin position="1"/>
        <end position="12"/>
    </location>
</feature>
<feature type="transmembrane region" description="Helical" evidence="1">
    <location>
        <begin position="13"/>
        <end position="33"/>
    </location>
</feature>
<feature type="topological domain" description="Periplasmic" evidence="1">
    <location>
        <begin position="34"/>
        <end position="46" status="greater than"/>
    </location>
</feature>
<feature type="binding site" description="axial binding residue" evidence="1">
    <location>
        <position position="29"/>
    </location>
    <ligand>
        <name>a bacteriochlorophyll</name>
        <dbReference type="ChEBI" id="CHEBI:38201"/>
    </ligand>
    <ligandPart>
        <name>Mg</name>
        <dbReference type="ChEBI" id="CHEBI:25107"/>
    </ligandPart>
</feature>
<feature type="non-terminal residue">
    <location>
        <position position="46"/>
    </location>
</feature>
<accession>P80100</accession>
<protein>
    <recommendedName>
        <fullName>Light-harvesting protein B800/850/890 alpha-1 chain</fullName>
    </recommendedName>
    <alternativeName>
        <fullName>Antenna pigment protein alpha-1 chain</fullName>
    </alternativeName>
    <alternativeName>
        <fullName>EHA-alpha-1</fullName>
    </alternativeName>
</protein>
<sequence length="46" mass="5430">MWRLWKLYDPRRVLIGIFSWLAVLALVIHFILLSTDRFNWVGGAAN</sequence>
<evidence type="ECO:0000255" key="1"/>
<evidence type="ECO:0000305" key="2"/>
<organism>
    <name type="scientific">Halorhodospira halophila (strain DSM 244 / SL1)</name>
    <name type="common">Ectothiorhodospira halophila (strain DSM 244 / SL1)</name>
    <dbReference type="NCBI Taxonomy" id="349124"/>
    <lineage>
        <taxon>Bacteria</taxon>
        <taxon>Pseudomonadati</taxon>
        <taxon>Pseudomonadota</taxon>
        <taxon>Gammaproteobacteria</taxon>
        <taxon>Chromatiales</taxon>
        <taxon>Ectothiorhodospiraceae</taxon>
        <taxon>Halorhodospira</taxon>
    </lineage>
</organism>
<dbReference type="PIR" id="S23288">
    <property type="entry name" value="S23288"/>
</dbReference>
<dbReference type="SMR" id="P80100"/>
<dbReference type="STRING" id="349124.Hhal_1410"/>
<dbReference type="GO" id="GO:0019866">
    <property type="term" value="C:organelle inner membrane"/>
    <property type="evidence" value="ECO:0007669"/>
    <property type="project" value="InterPro"/>
</dbReference>
<dbReference type="GO" id="GO:0005886">
    <property type="term" value="C:plasma membrane"/>
    <property type="evidence" value="ECO:0007669"/>
    <property type="project" value="UniProtKB-SubCell"/>
</dbReference>
<dbReference type="GO" id="GO:0030077">
    <property type="term" value="C:plasma membrane light-harvesting complex"/>
    <property type="evidence" value="ECO:0007669"/>
    <property type="project" value="InterPro"/>
</dbReference>
<dbReference type="GO" id="GO:0042314">
    <property type="term" value="F:bacteriochlorophyll binding"/>
    <property type="evidence" value="ECO:0007669"/>
    <property type="project" value="UniProtKB-KW"/>
</dbReference>
<dbReference type="GO" id="GO:0045156">
    <property type="term" value="F:electron transporter, transferring electrons within the cyclic electron transport pathway of photosynthesis activity"/>
    <property type="evidence" value="ECO:0007669"/>
    <property type="project" value="InterPro"/>
</dbReference>
<dbReference type="GO" id="GO:0046872">
    <property type="term" value="F:metal ion binding"/>
    <property type="evidence" value="ECO:0007669"/>
    <property type="project" value="UniProtKB-KW"/>
</dbReference>
<dbReference type="GO" id="GO:0019684">
    <property type="term" value="P:photosynthesis, light reaction"/>
    <property type="evidence" value="ECO:0007669"/>
    <property type="project" value="InterPro"/>
</dbReference>
<dbReference type="Gene3D" id="4.10.220.20">
    <property type="entry name" value="Light-harvesting complex"/>
    <property type="match status" value="1"/>
</dbReference>
<dbReference type="InterPro" id="IPR000066">
    <property type="entry name" value="Antenna_a/b"/>
</dbReference>
<dbReference type="InterPro" id="IPR018332">
    <property type="entry name" value="Antenna_alpha"/>
</dbReference>
<dbReference type="InterPro" id="IPR002361">
    <property type="entry name" value="Antenna_alpha_CS"/>
</dbReference>
<dbReference type="InterPro" id="IPR035889">
    <property type="entry name" value="Light-harvesting_complex"/>
</dbReference>
<dbReference type="NCBIfam" id="NF040861">
    <property type="entry name" value="pufA_517_ASD"/>
    <property type="match status" value="1"/>
</dbReference>
<dbReference type="Pfam" id="PF00556">
    <property type="entry name" value="LHC"/>
    <property type="match status" value="1"/>
</dbReference>
<dbReference type="PRINTS" id="PR00673">
    <property type="entry name" value="LIGHTHARVSTA"/>
</dbReference>
<dbReference type="SUPFAM" id="SSF56918">
    <property type="entry name" value="Light-harvesting complex subunits"/>
    <property type="match status" value="1"/>
</dbReference>
<dbReference type="PROSITE" id="PS00968">
    <property type="entry name" value="ANTENNA_COMP_ALPHA"/>
    <property type="match status" value="1"/>
</dbReference>
<keyword id="KW-0042">Antenna complex</keyword>
<keyword id="KW-0076">Bacteriochlorophyll</keyword>
<keyword id="KW-0997">Cell inner membrane</keyword>
<keyword id="KW-1003">Cell membrane</keyword>
<keyword id="KW-0148">Chlorophyll</keyword>
<keyword id="KW-0157">Chromophore</keyword>
<keyword id="KW-0903">Direct protein sequencing</keyword>
<keyword id="KW-0437">Light-harvesting polypeptide</keyword>
<keyword id="KW-0460">Magnesium</keyword>
<keyword id="KW-0472">Membrane</keyword>
<keyword id="KW-0479">Metal-binding</keyword>
<keyword id="KW-0812">Transmembrane</keyword>
<keyword id="KW-1133">Transmembrane helix</keyword>
<proteinExistence type="evidence at protein level"/>
<name>LHA1_HALHL</name>
<comment type="function">
    <text>Antenna complexes are light-harvesting systems, which transfer the excitation energy to the reaction centers.</text>
</comment>
<comment type="subunit">
    <text>The core complex is formed by different alpha and beta chains, binding bacteriochlorophyll molecules, and arranged most probably in tetrameric structures disposed around the reaction center. The non-pigmented gamma chains may constitute additional components.</text>
</comment>
<comment type="subcellular location">
    <subcellularLocation>
        <location>Cell inner membrane</location>
        <topology>Single-pass type II membrane protein</topology>
    </subcellularLocation>
</comment>
<comment type="similarity">
    <text evidence="2">Belongs to the antenna complex alpha subunit family.</text>
</comment>